<accession>Q0C0W3</accession>
<organism>
    <name type="scientific">Hyphomonas neptunium (strain ATCC 15444)</name>
    <dbReference type="NCBI Taxonomy" id="228405"/>
    <lineage>
        <taxon>Bacteria</taxon>
        <taxon>Pseudomonadati</taxon>
        <taxon>Pseudomonadota</taxon>
        <taxon>Alphaproteobacteria</taxon>
        <taxon>Hyphomonadales</taxon>
        <taxon>Hyphomonadaceae</taxon>
        <taxon>Hyphomonas</taxon>
    </lineage>
</organism>
<proteinExistence type="inferred from homology"/>
<name>SURE_HYPNA</name>
<feature type="chain" id="PRO_1000007740" description="5'-nucleotidase SurE">
    <location>
        <begin position="1"/>
        <end position="253"/>
    </location>
</feature>
<feature type="binding site" evidence="1">
    <location>
        <position position="8"/>
    </location>
    <ligand>
        <name>a divalent metal cation</name>
        <dbReference type="ChEBI" id="CHEBI:60240"/>
    </ligand>
</feature>
<feature type="binding site" evidence="1">
    <location>
        <position position="9"/>
    </location>
    <ligand>
        <name>a divalent metal cation</name>
        <dbReference type="ChEBI" id="CHEBI:60240"/>
    </ligand>
</feature>
<feature type="binding site" evidence="1">
    <location>
        <position position="40"/>
    </location>
    <ligand>
        <name>a divalent metal cation</name>
        <dbReference type="ChEBI" id="CHEBI:60240"/>
    </ligand>
</feature>
<feature type="binding site" evidence="1">
    <location>
        <position position="92"/>
    </location>
    <ligand>
        <name>a divalent metal cation</name>
        <dbReference type="ChEBI" id="CHEBI:60240"/>
    </ligand>
</feature>
<comment type="function">
    <text evidence="1">Nucleotidase that shows phosphatase activity on nucleoside 5'-monophosphates.</text>
</comment>
<comment type="catalytic activity">
    <reaction evidence="1">
        <text>a ribonucleoside 5'-phosphate + H2O = a ribonucleoside + phosphate</text>
        <dbReference type="Rhea" id="RHEA:12484"/>
        <dbReference type="ChEBI" id="CHEBI:15377"/>
        <dbReference type="ChEBI" id="CHEBI:18254"/>
        <dbReference type="ChEBI" id="CHEBI:43474"/>
        <dbReference type="ChEBI" id="CHEBI:58043"/>
        <dbReference type="EC" id="3.1.3.5"/>
    </reaction>
</comment>
<comment type="cofactor">
    <cofactor evidence="1">
        <name>a divalent metal cation</name>
        <dbReference type="ChEBI" id="CHEBI:60240"/>
    </cofactor>
    <text evidence="1">Binds 1 divalent metal cation per subunit.</text>
</comment>
<comment type="subcellular location">
    <subcellularLocation>
        <location evidence="1">Cytoplasm</location>
    </subcellularLocation>
</comment>
<comment type="similarity">
    <text evidence="1">Belongs to the SurE nucleotidase family.</text>
</comment>
<gene>
    <name evidence="1" type="primary">surE</name>
    <name type="ordered locus">HNE_1929</name>
</gene>
<reference key="1">
    <citation type="journal article" date="2006" name="J. Bacteriol.">
        <title>Comparative genomic evidence for a close relationship between the dimorphic prosthecate bacteria Hyphomonas neptunium and Caulobacter crescentus.</title>
        <authorList>
            <person name="Badger J.H."/>
            <person name="Hoover T.R."/>
            <person name="Brun Y.V."/>
            <person name="Weiner R.M."/>
            <person name="Laub M.T."/>
            <person name="Alexandre G."/>
            <person name="Mrazek J."/>
            <person name="Ren Q."/>
            <person name="Paulsen I.T."/>
            <person name="Nelson K.E."/>
            <person name="Khouri H.M."/>
            <person name="Radune D."/>
            <person name="Sosa J."/>
            <person name="Dodson R.J."/>
            <person name="Sullivan S.A."/>
            <person name="Rosovitz M.J."/>
            <person name="Madupu R."/>
            <person name="Brinkac L.M."/>
            <person name="Durkin A.S."/>
            <person name="Daugherty S.C."/>
            <person name="Kothari S.P."/>
            <person name="Giglio M.G."/>
            <person name="Zhou L."/>
            <person name="Haft D.H."/>
            <person name="Selengut J.D."/>
            <person name="Davidsen T.M."/>
            <person name="Yang Q."/>
            <person name="Zafar N."/>
            <person name="Ward N.L."/>
        </authorList>
    </citation>
    <scope>NUCLEOTIDE SEQUENCE [LARGE SCALE GENOMIC DNA]</scope>
    <source>
        <strain>ATCC 15444</strain>
    </source>
</reference>
<protein>
    <recommendedName>
        <fullName evidence="1">5'-nucleotidase SurE</fullName>
        <ecNumber evidence="1">3.1.3.5</ecNumber>
    </recommendedName>
    <alternativeName>
        <fullName evidence="1">Nucleoside 5'-monophosphate phosphohydrolase</fullName>
    </alternativeName>
</protein>
<sequence length="253" mass="28045">MRILLTNDDGINAPGLSVLEEIAKEISDDIWIAAPEEEQSGKGRAISLTHPVRVRKVGAKAWAVSGTPSDAVLLATRDLMPDMPDLVLSGVNRGQNIAEDTSFSGTIAAAMFGMQLGVPSIALSQAQNFRERGSLSWETSKAWGAKAIRPLLEMRWPKDVVMNVNFPDVEPGDVRGIQITRQGFRDEAIIHTDRREDLRGNDYYWIGYRGKLSKPDEGTDIRAIYDGYVSISPLHVDLTHEPFLKTLKESWQS</sequence>
<keyword id="KW-0963">Cytoplasm</keyword>
<keyword id="KW-0378">Hydrolase</keyword>
<keyword id="KW-0479">Metal-binding</keyword>
<keyword id="KW-0547">Nucleotide-binding</keyword>
<keyword id="KW-1185">Reference proteome</keyword>
<dbReference type="EC" id="3.1.3.5" evidence="1"/>
<dbReference type="EMBL" id="CP000158">
    <property type="protein sequence ID" value="ABI77681.1"/>
    <property type="molecule type" value="Genomic_DNA"/>
</dbReference>
<dbReference type="RefSeq" id="WP_011646930.1">
    <property type="nucleotide sequence ID" value="NC_008358.1"/>
</dbReference>
<dbReference type="SMR" id="Q0C0W3"/>
<dbReference type="STRING" id="228405.HNE_1929"/>
<dbReference type="KEGG" id="hne:HNE_1929"/>
<dbReference type="eggNOG" id="COG0496">
    <property type="taxonomic scope" value="Bacteria"/>
</dbReference>
<dbReference type="HOGENOM" id="CLU_045192_1_2_5"/>
<dbReference type="Proteomes" id="UP000001959">
    <property type="component" value="Chromosome"/>
</dbReference>
<dbReference type="GO" id="GO:0005737">
    <property type="term" value="C:cytoplasm"/>
    <property type="evidence" value="ECO:0007669"/>
    <property type="project" value="UniProtKB-SubCell"/>
</dbReference>
<dbReference type="GO" id="GO:0008254">
    <property type="term" value="F:3'-nucleotidase activity"/>
    <property type="evidence" value="ECO:0007669"/>
    <property type="project" value="TreeGrafter"/>
</dbReference>
<dbReference type="GO" id="GO:0008253">
    <property type="term" value="F:5'-nucleotidase activity"/>
    <property type="evidence" value="ECO:0007669"/>
    <property type="project" value="UniProtKB-UniRule"/>
</dbReference>
<dbReference type="GO" id="GO:0004309">
    <property type="term" value="F:exopolyphosphatase activity"/>
    <property type="evidence" value="ECO:0007669"/>
    <property type="project" value="TreeGrafter"/>
</dbReference>
<dbReference type="GO" id="GO:0046872">
    <property type="term" value="F:metal ion binding"/>
    <property type="evidence" value="ECO:0007669"/>
    <property type="project" value="UniProtKB-UniRule"/>
</dbReference>
<dbReference type="GO" id="GO:0000166">
    <property type="term" value="F:nucleotide binding"/>
    <property type="evidence" value="ECO:0007669"/>
    <property type="project" value="UniProtKB-KW"/>
</dbReference>
<dbReference type="Gene3D" id="3.40.1210.10">
    <property type="entry name" value="Survival protein SurE-like phosphatase/nucleotidase"/>
    <property type="match status" value="1"/>
</dbReference>
<dbReference type="HAMAP" id="MF_00060">
    <property type="entry name" value="SurE"/>
    <property type="match status" value="1"/>
</dbReference>
<dbReference type="InterPro" id="IPR030048">
    <property type="entry name" value="SurE"/>
</dbReference>
<dbReference type="InterPro" id="IPR002828">
    <property type="entry name" value="SurE-like_Pase/nucleotidase"/>
</dbReference>
<dbReference type="InterPro" id="IPR036523">
    <property type="entry name" value="SurE-like_sf"/>
</dbReference>
<dbReference type="NCBIfam" id="NF001490">
    <property type="entry name" value="PRK00346.1-4"/>
    <property type="match status" value="1"/>
</dbReference>
<dbReference type="NCBIfam" id="TIGR00087">
    <property type="entry name" value="surE"/>
    <property type="match status" value="1"/>
</dbReference>
<dbReference type="PANTHER" id="PTHR30457">
    <property type="entry name" value="5'-NUCLEOTIDASE SURE"/>
    <property type="match status" value="1"/>
</dbReference>
<dbReference type="PANTHER" id="PTHR30457:SF12">
    <property type="entry name" value="5'_3'-NUCLEOTIDASE SURE"/>
    <property type="match status" value="1"/>
</dbReference>
<dbReference type="Pfam" id="PF01975">
    <property type="entry name" value="SurE"/>
    <property type="match status" value="1"/>
</dbReference>
<dbReference type="SUPFAM" id="SSF64167">
    <property type="entry name" value="SurE-like"/>
    <property type="match status" value="1"/>
</dbReference>
<evidence type="ECO:0000255" key="1">
    <source>
        <dbReference type="HAMAP-Rule" id="MF_00060"/>
    </source>
</evidence>